<sequence length="327" mass="36579">MVRCDRGLQMLLTTAGAFAAFSLMAIAIGTDYWLYSSAHICNGTNLTMDDGPPPRRARGDLTHSGLWRVCCIEGIYKGHCFRINHFPEDNDYDHDSSEYLLRIVRASSVFPILSTILLLLGGLCIGAGRIYSRKNNIVLSAGILFVAAGLSNIIGIIVYISSNTGDPSDKRDEDKKNHYNYGWSFYFGALSFIVAETVGVLAVNIYIEKNKELRFKTKREFLKASSSSPYARMPSYRYRRRRSRSSSRSTEASPSRDVSPMGLKITGAIPMGELSMYTLSREPLKVTTAASYSPDQEASFLQVHDFFQQDLKEGFHVSMLNRRTTPV</sequence>
<feature type="chain" id="PRO_0000164678" description="Voltage-dependent calcium channel gamma-4 subunit">
    <location>
        <begin position="1"/>
        <end position="327"/>
    </location>
</feature>
<feature type="topological domain" description="Cytoplasmic" evidence="3">
    <location>
        <begin position="1"/>
        <end position="9"/>
    </location>
</feature>
<feature type="transmembrane region" description="Helical" evidence="3">
    <location>
        <begin position="10"/>
        <end position="30"/>
    </location>
</feature>
<feature type="topological domain" description="Extracellular" evidence="3">
    <location>
        <begin position="31"/>
        <end position="107"/>
    </location>
</feature>
<feature type="transmembrane region" description="Helical" evidence="3">
    <location>
        <begin position="108"/>
        <end position="128"/>
    </location>
</feature>
<feature type="topological domain" description="Cytoplasmic" evidence="3">
    <location>
        <begin position="129"/>
        <end position="136"/>
    </location>
</feature>
<feature type="transmembrane region" description="Helical" evidence="3">
    <location>
        <begin position="137"/>
        <end position="157"/>
    </location>
</feature>
<feature type="topological domain" description="Extracellular" evidence="3">
    <location>
        <begin position="158"/>
        <end position="186"/>
    </location>
</feature>
<feature type="transmembrane region" description="Helical" evidence="3">
    <location>
        <begin position="187"/>
        <end position="207"/>
    </location>
</feature>
<feature type="topological domain" description="Cytoplasmic" evidence="3">
    <location>
        <begin position="208"/>
        <end position="327"/>
    </location>
</feature>
<feature type="region of interest" description="Disordered" evidence="4">
    <location>
        <begin position="235"/>
        <end position="261"/>
    </location>
</feature>
<feature type="compositionally biased region" description="Low complexity" evidence="4">
    <location>
        <begin position="246"/>
        <end position="256"/>
    </location>
</feature>
<feature type="modified residue" description="Phosphoserine" evidence="2">
    <location>
        <position position="259"/>
    </location>
</feature>
<feature type="glycosylation site" description="N-linked (GlcNAc...) asparagine" evidence="3">
    <location>
        <position position="42"/>
    </location>
</feature>
<feature type="glycosylation site" description="N-linked (GlcNAc...) asparagine" evidence="3">
    <location>
        <position position="45"/>
    </location>
</feature>
<gene>
    <name type="primary">CACNG4</name>
</gene>
<evidence type="ECO:0000250" key="1"/>
<evidence type="ECO:0000250" key="2">
    <source>
        <dbReference type="UniProtKB" id="Q9JJV4"/>
    </source>
</evidence>
<evidence type="ECO:0000255" key="3"/>
<evidence type="ECO:0000256" key="4">
    <source>
        <dbReference type="SAM" id="MobiDB-lite"/>
    </source>
</evidence>
<evidence type="ECO:0000269" key="5">
    <source>
    </source>
</evidence>
<evidence type="ECO:0000269" key="6">
    <source>
    </source>
</evidence>
<evidence type="ECO:0000305" key="7"/>
<evidence type="ECO:0000305" key="8">
    <source>
    </source>
</evidence>
<name>CCG4_HUMAN</name>
<keyword id="KW-0106">Calcium</keyword>
<keyword id="KW-0107">Calcium channel</keyword>
<keyword id="KW-0109">Calcium transport</keyword>
<keyword id="KW-1003">Cell membrane</keyword>
<keyword id="KW-0325">Glycoprotein</keyword>
<keyword id="KW-0407">Ion channel</keyword>
<keyword id="KW-0406">Ion transport</keyword>
<keyword id="KW-0472">Membrane</keyword>
<keyword id="KW-0597">Phosphoprotein</keyword>
<keyword id="KW-1267">Proteomics identification</keyword>
<keyword id="KW-1185">Reference proteome</keyword>
<keyword id="KW-0812">Transmembrane</keyword>
<keyword id="KW-1133">Transmembrane helix</keyword>
<keyword id="KW-0813">Transport</keyword>
<keyword id="KW-0851">Voltage-gated channel</keyword>
<dbReference type="EMBL" id="AF142625">
    <property type="protein sequence ID" value="AAF03090.1"/>
    <property type="molecule type" value="Genomic_DNA"/>
</dbReference>
<dbReference type="EMBL" id="AF142622">
    <property type="protein sequence ID" value="AAF03090.1"/>
    <property type="status" value="JOINED"/>
    <property type="molecule type" value="Genomic_DNA"/>
</dbReference>
<dbReference type="EMBL" id="AF142623">
    <property type="protein sequence ID" value="AAF03090.1"/>
    <property type="status" value="JOINED"/>
    <property type="molecule type" value="Genomic_DNA"/>
</dbReference>
<dbReference type="EMBL" id="AF142624">
    <property type="protein sequence ID" value="AAF03090.1"/>
    <property type="status" value="JOINED"/>
    <property type="molecule type" value="Genomic_DNA"/>
</dbReference>
<dbReference type="EMBL" id="AF162692">
    <property type="protein sequence ID" value="AAF14538.1"/>
    <property type="molecule type" value="mRNA"/>
</dbReference>
<dbReference type="EMBL" id="AK315149">
    <property type="protein sequence ID" value="BAG37597.1"/>
    <property type="molecule type" value="mRNA"/>
</dbReference>
<dbReference type="EMBL" id="CH471099">
    <property type="protein sequence ID" value="EAW89020.1"/>
    <property type="molecule type" value="Genomic_DNA"/>
</dbReference>
<dbReference type="EMBL" id="BC034532">
    <property type="protein sequence ID" value="AAH34532.1"/>
    <property type="molecule type" value="mRNA"/>
</dbReference>
<dbReference type="CCDS" id="CCDS11667.1"/>
<dbReference type="RefSeq" id="NP_055220.1">
    <property type="nucleotide sequence ID" value="NM_014405.4"/>
</dbReference>
<dbReference type="SMR" id="Q9UBN1"/>
<dbReference type="BioGRID" id="117994">
    <property type="interactions" value="75"/>
</dbReference>
<dbReference type="FunCoup" id="Q9UBN1">
    <property type="interactions" value="624"/>
</dbReference>
<dbReference type="IntAct" id="Q9UBN1">
    <property type="interactions" value="48"/>
</dbReference>
<dbReference type="STRING" id="9606.ENSP00000262138"/>
<dbReference type="ChEMBL" id="CHEMBL2363032"/>
<dbReference type="DrugBank" id="DB13746">
    <property type="generic name" value="Bioallethrin"/>
</dbReference>
<dbReference type="DrugBank" id="DB11148">
    <property type="generic name" value="Butamben"/>
</dbReference>
<dbReference type="DrugBank" id="DB09235">
    <property type="generic name" value="Efonidipine"/>
</dbReference>
<dbReference type="DrugBank" id="DB00228">
    <property type="generic name" value="Enflurane"/>
</dbReference>
<dbReference type="DrugBank" id="DB00153">
    <property type="generic name" value="Ergocalciferol"/>
</dbReference>
<dbReference type="DrugBank" id="DB00622">
    <property type="generic name" value="Nicardipine"/>
</dbReference>
<dbReference type="DrugBank" id="DB00661">
    <property type="generic name" value="Verapamil"/>
</dbReference>
<dbReference type="TCDB" id="8.A.16.2.3">
    <property type="family name" value="the ca(+) channel auxiliary subunit Gama1-Gama8 (ccaGama) family"/>
</dbReference>
<dbReference type="GlyCosmos" id="Q9UBN1">
    <property type="glycosylation" value="2 sites, No reported glycans"/>
</dbReference>
<dbReference type="GlyGen" id="Q9UBN1">
    <property type="glycosylation" value="2 sites"/>
</dbReference>
<dbReference type="iPTMnet" id="Q9UBN1"/>
<dbReference type="PhosphoSitePlus" id="Q9UBN1"/>
<dbReference type="BioMuta" id="CACNG4"/>
<dbReference type="DMDM" id="10719940"/>
<dbReference type="jPOST" id="Q9UBN1"/>
<dbReference type="MassIVE" id="Q9UBN1"/>
<dbReference type="PaxDb" id="9606-ENSP00000262138"/>
<dbReference type="PeptideAtlas" id="Q9UBN1"/>
<dbReference type="ProteomicsDB" id="84011"/>
<dbReference type="Antibodypedia" id="19199">
    <property type="antibodies" value="173 antibodies from 28 providers"/>
</dbReference>
<dbReference type="DNASU" id="27092"/>
<dbReference type="Ensembl" id="ENST00000262138.4">
    <property type="protein sequence ID" value="ENSP00000262138.3"/>
    <property type="gene ID" value="ENSG00000075461.6"/>
</dbReference>
<dbReference type="GeneID" id="27092"/>
<dbReference type="KEGG" id="hsa:27092"/>
<dbReference type="MANE-Select" id="ENST00000262138.4">
    <property type="protein sequence ID" value="ENSP00000262138.3"/>
    <property type="RefSeq nucleotide sequence ID" value="NM_014405.4"/>
    <property type="RefSeq protein sequence ID" value="NP_055220.1"/>
</dbReference>
<dbReference type="UCSC" id="uc002jft.3">
    <property type="organism name" value="human"/>
</dbReference>
<dbReference type="AGR" id="HGNC:1408"/>
<dbReference type="CTD" id="27092"/>
<dbReference type="DisGeNET" id="27092"/>
<dbReference type="GeneCards" id="CACNG4"/>
<dbReference type="HGNC" id="HGNC:1408">
    <property type="gene designation" value="CACNG4"/>
</dbReference>
<dbReference type="HPA" id="ENSG00000075461">
    <property type="expression patterns" value="Tissue enriched (brain)"/>
</dbReference>
<dbReference type="MIM" id="606404">
    <property type="type" value="gene"/>
</dbReference>
<dbReference type="neXtProt" id="NX_Q9UBN1"/>
<dbReference type="OpenTargets" id="ENSG00000075461"/>
<dbReference type="PharmGKB" id="PA26018"/>
<dbReference type="VEuPathDB" id="HostDB:ENSG00000075461"/>
<dbReference type="eggNOG" id="ENOG502QPQH">
    <property type="taxonomic scope" value="Eukaryota"/>
</dbReference>
<dbReference type="GeneTree" id="ENSGT01050000244893"/>
<dbReference type="HOGENOM" id="CLU_053704_0_1_1"/>
<dbReference type="InParanoid" id="Q9UBN1"/>
<dbReference type="OMA" id="SIPMNEI"/>
<dbReference type="OrthoDB" id="9990458at2759"/>
<dbReference type="PAN-GO" id="Q9UBN1">
    <property type="GO annotations" value="10 GO annotations based on evolutionary models"/>
</dbReference>
<dbReference type="PhylomeDB" id="Q9UBN1"/>
<dbReference type="TreeFam" id="TF327980"/>
<dbReference type="PathwayCommons" id="Q9UBN1"/>
<dbReference type="Reactome" id="R-HSA-112308">
    <property type="pathway name" value="Presynaptic depolarization and calcium channel opening"/>
</dbReference>
<dbReference type="Reactome" id="R-HSA-399719">
    <property type="pathway name" value="Trafficking of AMPA receptors"/>
</dbReference>
<dbReference type="Reactome" id="R-HSA-5576892">
    <property type="pathway name" value="Phase 0 - rapid depolarisation"/>
</dbReference>
<dbReference type="Reactome" id="R-HSA-5576893">
    <property type="pathway name" value="Phase 2 - plateau phase"/>
</dbReference>
<dbReference type="Reactome" id="R-HSA-5682910">
    <property type="pathway name" value="LGI-ADAM interactions"/>
</dbReference>
<dbReference type="SignaLink" id="Q9UBN1"/>
<dbReference type="BioGRID-ORCS" id="27092">
    <property type="hits" value="20 hits in 1139 CRISPR screens"/>
</dbReference>
<dbReference type="ChiTaRS" id="CACNG4">
    <property type="organism name" value="human"/>
</dbReference>
<dbReference type="GeneWiki" id="CACNG4"/>
<dbReference type="GenomeRNAi" id="27092"/>
<dbReference type="Pharos" id="Q9UBN1">
    <property type="development level" value="Tbio"/>
</dbReference>
<dbReference type="PRO" id="PR:Q9UBN1"/>
<dbReference type="Proteomes" id="UP000005640">
    <property type="component" value="Chromosome 17"/>
</dbReference>
<dbReference type="RNAct" id="Q9UBN1">
    <property type="molecule type" value="protein"/>
</dbReference>
<dbReference type="Bgee" id="ENSG00000075461">
    <property type="expression patterns" value="Expressed in cortical plate and 128 other cell types or tissues"/>
</dbReference>
<dbReference type="ExpressionAtlas" id="Q9UBN1">
    <property type="expression patterns" value="baseline and differential"/>
</dbReference>
<dbReference type="GO" id="GO:0032281">
    <property type="term" value="C:AMPA glutamate receptor complex"/>
    <property type="evidence" value="ECO:0000250"/>
    <property type="project" value="UniProtKB"/>
</dbReference>
<dbReference type="GO" id="GO:0044297">
    <property type="term" value="C:cell body"/>
    <property type="evidence" value="ECO:0007669"/>
    <property type="project" value="Ensembl"/>
</dbReference>
<dbReference type="GO" id="GO:0009986">
    <property type="term" value="C:cell surface"/>
    <property type="evidence" value="ECO:0007669"/>
    <property type="project" value="Ensembl"/>
</dbReference>
<dbReference type="GO" id="GO:0030666">
    <property type="term" value="C:endocytic vesicle membrane"/>
    <property type="evidence" value="ECO:0000304"/>
    <property type="project" value="Reactome"/>
</dbReference>
<dbReference type="GO" id="GO:0098978">
    <property type="term" value="C:glutamatergic synapse"/>
    <property type="evidence" value="ECO:0007669"/>
    <property type="project" value="Ensembl"/>
</dbReference>
<dbReference type="GO" id="GO:1990454">
    <property type="term" value="C:L-type voltage-gated calcium channel complex"/>
    <property type="evidence" value="ECO:0000314"/>
    <property type="project" value="UniProtKB"/>
</dbReference>
<dbReference type="GO" id="GO:0005886">
    <property type="term" value="C:plasma membrane"/>
    <property type="evidence" value="ECO:0000304"/>
    <property type="project" value="Reactome"/>
</dbReference>
<dbReference type="GO" id="GO:0098839">
    <property type="term" value="C:postsynaptic density membrane"/>
    <property type="evidence" value="ECO:0000318"/>
    <property type="project" value="GO_Central"/>
</dbReference>
<dbReference type="GO" id="GO:0036477">
    <property type="term" value="C:somatodendritic compartment"/>
    <property type="evidence" value="ECO:0007669"/>
    <property type="project" value="Ensembl"/>
</dbReference>
<dbReference type="GO" id="GO:0005246">
    <property type="term" value="F:calcium channel regulator activity"/>
    <property type="evidence" value="ECO:0000314"/>
    <property type="project" value="UniProtKB"/>
</dbReference>
<dbReference type="GO" id="GO:0016247">
    <property type="term" value="F:channel regulator activity"/>
    <property type="evidence" value="ECO:0000318"/>
    <property type="project" value="GO_Central"/>
</dbReference>
<dbReference type="GO" id="GO:0035255">
    <property type="term" value="F:ionotropic glutamate receptor binding"/>
    <property type="evidence" value="ECO:0007669"/>
    <property type="project" value="Ensembl"/>
</dbReference>
<dbReference type="GO" id="GO:0005245">
    <property type="term" value="F:voltage-gated calcium channel activity"/>
    <property type="evidence" value="ECO:0000318"/>
    <property type="project" value="GO_Central"/>
</dbReference>
<dbReference type="GO" id="GO:0051968">
    <property type="term" value="P:positive regulation of synaptic transmission, glutamatergic"/>
    <property type="evidence" value="ECO:0000318"/>
    <property type="project" value="GO_Central"/>
</dbReference>
<dbReference type="GO" id="GO:0098970">
    <property type="term" value="P:postsynaptic neurotransmitter receptor diffusion trapping"/>
    <property type="evidence" value="ECO:0000318"/>
    <property type="project" value="GO_Central"/>
</dbReference>
<dbReference type="GO" id="GO:2000311">
    <property type="term" value="P:regulation of AMPA receptor activity"/>
    <property type="evidence" value="ECO:0000314"/>
    <property type="project" value="UniProtKB"/>
</dbReference>
<dbReference type="GO" id="GO:0042220">
    <property type="term" value="P:response to cocaine"/>
    <property type="evidence" value="ECO:0007669"/>
    <property type="project" value="Ensembl"/>
</dbReference>
<dbReference type="GO" id="GO:0019226">
    <property type="term" value="P:transmission of nerve impulse"/>
    <property type="evidence" value="ECO:0000318"/>
    <property type="project" value="GO_Central"/>
</dbReference>
<dbReference type="FunFam" id="1.20.140.150:FF:000004">
    <property type="entry name" value="Voltage-dependent calcium channel gamma-4 subunit"/>
    <property type="match status" value="1"/>
</dbReference>
<dbReference type="Gene3D" id="1.20.140.150">
    <property type="match status" value="1"/>
</dbReference>
<dbReference type="InterPro" id="IPR051072">
    <property type="entry name" value="CACNG_subunit"/>
</dbReference>
<dbReference type="InterPro" id="IPR004031">
    <property type="entry name" value="PMP22/EMP/MP20/Claudin"/>
</dbReference>
<dbReference type="InterPro" id="IPR005423">
    <property type="entry name" value="VDCC_g4su"/>
</dbReference>
<dbReference type="InterPro" id="IPR008368">
    <property type="entry name" value="VDCC_gsu"/>
</dbReference>
<dbReference type="PANTHER" id="PTHR12107">
    <property type="entry name" value="VOLTAGE-DEPENDENT CALCIUM CHANNEL GAMMA SUBUNIT"/>
    <property type="match status" value="1"/>
</dbReference>
<dbReference type="PANTHER" id="PTHR12107:SF7">
    <property type="entry name" value="VOLTAGE-DEPENDENT CALCIUM CHANNEL GAMMA-4 SUBUNIT"/>
    <property type="match status" value="1"/>
</dbReference>
<dbReference type="Pfam" id="PF00822">
    <property type="entry name" value="PMP22_Claudin"/>
    <property type="match status" value="1"/>
</dbReference>
<dbReference type="PRINTS" id="PR01792">
    <property type="entry name" value="VDCCGAMMA"/>
</dbReference>
<dbReference type="PRINTS" id="PR01603">
    <property type="entry name" value="VDCCGAMMA4"/>
</dbReference>
<accession>Q9UBN1</accession>
<accession>B2RCK0</accession>
<protein>
    <recommendedName>
        <fullName>Voltage-dependent calcium channel gamma-4 subunit</fullName>
    </recommendedName>
    <alternativeName>
        <fullName>Neuronal voltage-gated calcium channel gamma-4 subunit</fullName>
    </alternativeName>
    <alternativeName>
        <fullName>Transmembrane AMPAR regulatory protein gamma-4</fullName>
        <shortName>TARP gamma-4</shortName>
    </alternativeName>
</protein>
<reference key="1">
    <citation type="journal article" date="1999" name="Genome Res.">
        <title>Identification of three novel Ca(2+) channel gamma subunit genes reveals molecular diversification by tandem and chromosome duplication.</title>
        <authorList>
            <person name="Burgess D.L."/>
            <person name="Davis C.F."/>
            <person name="Gefrides L.A."/>
            <person name="Noebels J.L."/>
        </authorList>
    </citation>
    <scope>NUCLEOTIDE SEQUENCE [GENOMIC DNA]</scope>
</reference>
<reference key="2">
    <citation type="submission" date="1999-06" db="EMBL/GenBank/DDBJ databases">
        <title>Identification of the Homo sapiens putative voltage-gated calcium channel gamma-4 subunit.</title>
        <authorList>
            <person name="Black J.L. III"/>
            <person name="Lennon V.A."/>
        </authorList>
    </citation>
    <scope>NUCLEOTIDE SEQUENCE [MRNA]</scope>
    <source>
        <tissue>Brain</tissue>
    </source>
</reference>
<reference key="3">
    <citation type="journal article" date="2004" name="Nat. Genet.">
        <title>Complete sequencing and characterization of 21,243 full-length human cDNAs.</title>
        <authorList>
            <person name="Ota T."/>
            <person name="Suzuki Y."/>
            <person name="Nishikawa T."/>
            <person name="Otsuki T."/>
            <person name="Sugiyama T."/>
            <person name="Irie R."/>
            <person name="Wakamatsu A."/>
            <person name="Hayashi K."/>
            <person name="Sato H."/>
            <person name="Nagai K."/>
            <person name="Kimura K."/>
            <person name="Makita H."/>
            <person name="Sekine M."/>
            <person name="Obayashi M."/>
            <person name="Nishi T."/>
            <person name="Shibahara T."/>
            <person name="Tanaka T."/>
            <person name="Ishii S."/>
            <person name="Yamamoto J."/>
            <person name="Saito K."/>
            <person name="Kawai Y."/>
            <person name="Isono Y."/>
            <person name="Nakamura Y."/>
            <person name="Nagahari K."/>
            <person name="Murakami K."/>
            <person name="Yasuda T."/>
            <person name="Iwayanagi T."/>
            <person name="Wagatsuma M."/>
            <person name="Shiratori A."/>
            <person name="Sudo H."/>
            <person name="Hosoiri T."/>
            <person name="Kaku Y."/>
            <person name="Kodaira H."/>
            <person name="Kondo H."/>
            <person name="Sugawara M."/>
            <person name="Takahashi M."/>
            <person name="Kanda K."/>
            <person name="Yokoi T."/>
            <person name="Furuya T."/>
            <person name="Kikkawa E."/>
            <person name="Omura Y."/>
            <person name="Abe K."/>
            <person name="Kamihara K."/>
            <person name="Katsuta N."/>
            <person name="Sato K."/>
            <person name="Tanikawa M."/>
            <person name="Yamazaki M."/>
            <person name="Ninomiya K."/>
            <person name="Ishibashi T."/>
            <person name="Yamashita H."/>
            <person name="Murakawa K."/>
            <person name="Fujimori K."/>
            <person name="Tanai H."/>
            <person name="Kimata M."/>
            <person name="Watanabe M."/>
            <person name="Hiraoka S."/>
            <person name="Chiba Y."/>
            <person name="Ishida S."/>
            <person name="Ono Y."/>
            <person name="Takiguchi S."/>
            <person name="Watanabe S."/>
            <person name="Yosida M."/>
            <person name="Hotuta T."/>
            <person name="Kusano J."/>
            <person name="Kanehori K."/>
            <person name="Takahashi-Fujii A."/>
            <person name="Hara H."/>
            <person name="Tanase T.-O."/>
            <person name="Nomura Y."/>
            <person name="Togiya S."/>
            <person name="Komai F."/>
            <person name="Hara R."/>
            <person name="Takeuchi K."/>
            <person name="Arita M."/>
            <person name="Imose N."/>
            <person name="Musashino K."/>
            <person name="Yuuki H."/>
            <person name="Oshima A."/>
            <person name="Sasaki N."/>
            <person name="Aotsuka S."/>
            <person name="Yoshikawa Y."/>
            <person name="Matsunawa H."/>
            <person name="Ichihara T."/>
            <person name="Shiohata N."/>
            <person name="Sano S."/>
            <person name="Moriya S."/>
            <person name="Momiyama H."/>
            <person name="Satoh N."/>
            <person name="Takami S."/>
            <person name="Terashima Y."/>
            <person name="Suzuki O."/>
            <person name="Nakagawa S."/>
            <person name="Senoh A."/>
            <person name="Mizoguchi H."/>
            <person name="Goto Y."/>
            <person name="Shimizu F."/>
            <person name="Wakebe H."/>
            <person name="Hishigaki H."/>
            <person name="Watanabe T."/>
            <person name="Sugiyama A."/>
            <person name="Takemoto M."/>
            <person name="Kawakami B."/>
            <person name="Yamazaki M."/>
            <person name="Watanabe K."/>
            <person name="Kumagai A."/>
            <person name="Itakura S."/>
            <person name="Fukuzumi Y."/>
            <person name="Fujimori Y."/>
            <person name="Komiyama M."/>
            <person name="Tashiro H."/>
            <person name="Tanigami A."/>
            <person name="Fujiwara T."/>
            <person name="Ono T."/>
            <person name="Yamada K."/>
            <person name="Fujii Y."/>
            <person name="Ozaki K."/>
            <person name="Hirao M."/>
            <person name="Ohmori Y."/>
            <person name="Kawabata A."/>
            <person name="Hikiji T."/>
            <person name="Kobatake N."/>
            <person name="Inagaki H."/>
            <person name="Ikema Y."/>
            <person name="Okamoto S."/>
            <person name="Okitani R."/>
            <person name="Kawakami T."/>
            <person name="Noguchi S."/>
            <person name="Itoh T."/>
            <person name="Shigeta K."/>
            <person name="Senba T."/>
            <person name="Matsumura K."/>
            <person name="Nakajima Y."/>
            <person name="Mizuno T."/>
            <person name="Morinaga M."/>
            <person name="Sasaki M."/>
            <person name="Togashi T."/>
            <person name="Oyama M."/>
            <person name="Hata H."/>
            <person name="Watanabe M."/>
            <person name="Komatsu T."/>
            <person name="Mizushima-Sugano J."/>
            <person name="Satoh T."/>
            <person name="Shirai Y."/>
            <person name="Takahashi Y."/>
            <person name="Nakagawa K."/>
            <person name="Okumura K."/>
            <person name="Nagase T."/>
            <person name="Nomura N."/>
            <person name="Kikuchi H."/>
            <person name="Masuho Y."/>
            <person name="Yamashita R."/>
            <person name="Nakai K."/>
            <person name="Yada T."/>
            <person name="Nakamura Y."/>
            <person name="Ohara O."/>
            <person name="Isogai T."/>
            <person name="Sugano S."/>
        </authorList>
    </citation>
    <scope>NUCLEOTIDE SEQUENCE [LARGE SCALE MRNA]</scope>
    <source>
        <tissue>Caudate nucleus</tissue>
    </source>
</reference>
<reference key="4">
    <citation type="submission" date="2005-07" db="EMBL/GenBank/DDBJ databases">
        <authorList>
            <person name="Mural R.J."/>
            <person name="Istrail S."/>
            <person name="Sutton G.G."/>
            <person name="Florea L."/>
            <person name="Halpern A.L."/>
            <person name="Mobarry C.M."/>
            <person name="Lippert R."/>
            <person name="Walenz B."/>
            <person name="Shatkay H."/>
            <person name="Dew I."/>
            <person name="Miller J.R."/>
            <person name="Flanigan M.J."/>
            <person name="Edwards N.J."/>
            <person name="Bolanos R."/>
            <person name="Fasulo D."/>
            <person name="Halldorsson B.V."/>
            <person name="Hannenhalli S."/>
            <person name="Turner R."/>
            <person name="Yooseph S."/>
            <person name="Lu F."/>
            <person name="Nusskern D.R."/>
            <person name="Shue B.C."/>
            <person name="Zheng X.H."/>
            <person name="Zhong F."/>
            <person name="Delcher A.L."/>
            <person name="Huson D.H."/>
            <person name="Kravitz S.A."/>
            <person name="Mouchard L."/>
            <person name="Reinert K."/>
            <person name="Remington K.A."/>
            <person name="Clark A.G."/>
            <person name="Waterman M.S."/>
            <person name="Eichler E.E."/>
            <person name="Adams M.D."/>
            <person name="Hunkapiller M.W."/>
            <person name="Myers E.W."/>
            <person name="Venter J.C."/>
        </authorList>
    </citation>
    <scope>NUCLEOTIDE SEQUENCE [LARGE SCALE GENOMIC DNA]</scope>
</reference>
<reference key="5">
    <citation type="journal article" date="2004" name="Genome Res.">
        <title>The status, quality, and expansion of the NIH full-length cDNA project: the Mammalian Gene Collection (MGC).</title>
        <authorList>
            <consortium name="The MGC Project Team"/>
        </authorList>
    </citation>
    <scope>NUCLEOTIDE SEQUENCE [LARGE SCALE MRNA]</scope>
    <source>
        <tissue>Brain</tissue>
    </source>
</reference>
<reference key="6">
    <citation type="journal article" date="2010" name="Neuron">
        <title>Hippocampal AMPA receptor gating controlled by both TARP and cornichon proteins.</title>
        <authorList>
            <person name="Kato A.S."/>
            <person name="Gill M.B."/>
            <person name="Ho M.T."/>
            <person name="Yu H."/>
            <person name="Tu Y."/>
            <person name="Siuda E.R."/>
            <person name="Wang H."/>
            <person name="Qian Y.W."/>
            <person name="Nisenbaum E.S."/>
            <person name="Tomita S."/>
            <person name="Bredt D.S."/>
        </authorList>
    </citation>
    <scope>FUNCTION</scope>
    <scope>SUBUNIT</scope>
</reference>
<reference key="7">
    <citation type="journal article" date="2011" name="FASEB J.">
        <title>Cardiac L-type calcium channel (Cav1.2) associates with gamma subunits.</title>
        <authorList>
            <person name="Yang L."/>
            <person name="Katchman A."/>
            <person name="Morrow J.P."/>
            <person name="Doshi D."/>
            <person name="Marx S.O."/>
        </authorList>
    </citation>
    <scope>FUNCTION</scope>
    <scope>TISSUE SPECIFICITY</scope>
    <scope>INTERACTION WITH CACNA1C</scope>
    <scope>IDENTIFICATION IN A COMPLEX WITH CACNA1C; CACNA2D1 AND CACNB1</scope>
    <scope>SUBUNIT</scope>
    <scope>SUBCELLULAR LOCATION</scope>
</reference>
<proteinExistence type="evidence at protein level"/>
<comment type="function">
    <text evidence="5 6">Regulates the activity of L-type calcium channels that contain CACNA1C as pore-forming subunit (PubMed:21127204). Regulates the trafficking and gating properties of AMPA-selective glutamate receptors (AMPARs), including GRIA1 and GRIA4. Promotes their targeting to the cell membrane and synapses and modulates their gating properties by slowing their rates of activation, deactivation and desensitization and by mediating their resensitization (PubMed:21172611).</text>
</comment>
<comment type="subunit">
    <text evidence="5 6">Interacts with CACNA1C. Identified in a complex with the L-type calcium channel subunits CACNA1C, CACNA2D1 and either CACNB1 or CACNB2 (PubMed:21127204). Acts as an auxiliary subunit for AMPA-selective glutamate receptors (AMPARs) (PubMed:21172611). Interacts with GRIA1 (PubMed:21172611).</text>
</comment>
<comment type="subcellular location">
    <subcellularLocation>
        <location evidence="8">Cell membrane</location>
        <topology evidence="1">Multi-pass membrane protein</topology>
    </subcellularLocation>
</comment>
<comment type="tissue specificity">
    <text evidence="5">Detected in heart left ventricle.</text>
</comment>
<comment type="similarity">
    <text evidence="7">Belongs to the PMP-22/EMP/MP20 family. CACNG subfamily.</text>
</comment>
<organism>
    <name type="scientific">Homo sapiens</name>
    <name type="common">Human</name>
    <dbReference type="NCBI Taxonomy" id="9606"/>
    <lineage>
        <taxon>Eukaryota</taxon>
        <taxon>Metazoa</taxon>
        <taxon>Chordata</taxon>
        <taxon>Craniata</taxon>
        <taxon>Vertebrata</taxon>
        <taxon>Euteleostomi</taxon>
        <taxon>Mammalia</taxon>
        <taxon>Eutheria</taxon>
        <taxon>Euarchontoglires</taxon>
        <taxon>Primates</taxon>
        <taxon>Haplorrhini</taxon>
        <taxon>Catarrhini</taxon>
        <taxon>Hominidae</taxon>
        <taxon>Homo</taxon>
    </lineage>
</organism>